<proteinExistence type="evidence at protein level"/>
<reference key="1">
    <citation type="journal article" date="2005" name="J. Antibiot.">
        <title>Extended sequence and functional analysis of the butirosin biosynthetic gene cluster in Bacillus circulans SANK 72073.</title>
        <authorList>
            <person name="Kudo F."/>
            <person name="Numakura M."/>
            <person name="Tamegai H."/>
            <person name="Yamamoto H."/>
            <person name="Eguchi T."/>
            <person name="Kakinuma K."/>
        </authorList>
    </citation>
    <scope>NUCLEOTIDE SEQUENCE [GENOMIC DNA]</scope>
    <source>
        <strain>ATCC 21557 / NCIMB 12336 / BU-1709-YQW-B6</strain>
    </source>
</reference>
<reference key="2">
    <citation type="submission" date="2004-06" db="EMBL/GenBank/DDBJ databases">
        <title>Analysis and comparison of the biosynthetic gene clusters for the 2-deoxystreptamine-containing aminoglycoside antibiotics ribostamycin, neomycin, lividomycin, paromomycin and butirosin.</title>
        <authorList>
            <person name="Aboshanab K.M."/>
            <person name="Schmidt-Beissner H."/>
            <person name="Wehmeier U.F."/>
            <person name="Welzel K."/>
            <person name="Vente A."/>
            <person name="Piepersberg W."/>
        </authorList>
    </citation>
    <scope>NUCLEOTIDE SEQUENCE [GENOMIC DNA]</scope>
    <source>
        <strain>ATCC 21557 / NCIMB 12336 / BU-1709-YQW-B6</strain>
    </source>
</reference>
<reference key="3">
    <citation type="journal article" date="2007" name="Chem. Biol.">
        <title>Biosynthesis of butirosin: transfer and deprotection of the unique amino acid side chain.</title>
        <authorList>
            <person name="Llewellyn N.M."/>
            <person name="Li Y."/>
            <person name="Spencer J.B."/>
        </authorList>
    </citation>
    <scope>FUNCTION</scope>
    <scope>CATALYTIC ACTIVITY</scope>
    <scope>PATHWAY</scope>
    <source>
        <strain>ATCC 21557 / NCIMB 12336 / BU-1709-YQW-B6</strain>
    </source>
</reference>
<dbReference type="EC" id="2.3.2.19"/>
<dbReference type="EMBL" id="AB097196">
    <property type="protein sequence ID" value="BAE07072.1"/>
    <property type="molecule type" value="Genomic_DNA"/>
</dbReference>
<dbReference type="EMBL" id="AJ781030">
    <property type="protein sequence ID" value="CAG77426.1"/>
    <property type="molecule type" value="Genomic_DNA"/>
</dbReference>
<dbReference type="SMR" id="Q4H4E9"/>
<dbReference type="KEGG" id="ag:BAE07072"/>
<dbReference type="BioCyc" id="MetaCyc:MONOMER-17275"/>
<dbReference type="UniPathway" id="UPA00964"/>
<dbReference type="GO" id="GO:0016755">
    <property type="term" value="F:aminoacyltransferase activity"/>
    <property type="evidence" value="ECO:0000314"/>
    <property type="project" value="UniProtKB"/>
</dbReference>
<dbReference type="GO" id="GO:0017000">
    <property type="term" value="P:antibiotic biosynthetic process"/>
    <property type="evidence" value="ECO:0000314"/>
    <property type="project" value="UniProtKB"/>
</dbReference>
<dbReference type="Gene3D" id="3.90.70.10">
    <property type="entry name" value="Cysteine proteinases"/>
    <property type="match status" value="1"/>
</dbReference>
<dbReference type="InterPro" id="IPR026935">
    <property type="entry name" value="BtrH_N"/>
</dbReference>
<dbReference type="Pfam" id="PF14399">
    <property type="entry name" value="BtrH_N"/>
    <property type="match status" value="1"/>
</dbReference>
<sequence>MCLTRYDEKFFDCRKSQIIAYLDSQQVPVIPLFYNSYQSTAEIYRQIFIENKSKWKYSEPSFSDDDLLRKGIRPVRASFPDFSQASDCLKDLLARHKLVFVWGDEYCLPYRKEAFQAIHSTHSLVVTGYDGENKAYYVEDWDGLYGYLPAVHLEAAFDSLSRQMRTLLVLELNDEEMRENKQEDTDLFRKWLQAFEDDYIFYDRVLLDMRDYEENRLISMDHGLRLIAASRHVFSKFLHYIDDAPEEVGLLIRNHQLANHIAAIVRRYIIAKQIDWDGAACKIRQLREQEDDFMRKLKSRYG</sequence>
<feature type="chain" id="PRO_0000421730" description="Ribostamycin:4-(gamma-L-glutamylamino)-(S)-2-hydroxybutanoyl-[BtrI acyl-carrier protein] 4-(gamma-L-glutamylamino)-(S)-2-hydroxybutanoate transferase">
    <location>
        <begin position="1"/>
        <end position="302"/>
    </location>
</feature>
<organism>
    <name type="scientific">Niallia circulans</name>
    <name type="common">Bacillus circulans</name>
    <dbReference type="NCBI Taxonomy" id="1397"/>
    <lineage>
        <taxon>Bacteria</taxon>
        <taxon>Bacillati</taxon>
        <taxon>Bacillota</taxon>
        <taxon>Bacilli</taxon>
        <taxon>Bacillales</taxon>
        <taxon>Bacillaceae</taxon>
        <taxon>Niallia</taxon>
    </lineage>
</organism>
<protein>
    <recommendedName>
        <fullName>Ribostamycin:4-(gamma-L-glutamylamino)-(S)-2-hydroxybutanoyl-[BtrI acyl-carrier protein] 4-(gamma-L-glutamylamino)-(S)-2-hydroxybutanoate transferase</fullName>
        <ecNumber>2.3.2.19</ecNumber>
    </recommendedName>
    <alternativeName>
        <fullName>Acyl carrier protein:aminoglycoside acyltransferase</fullName>
    </alternativeName>
    <alternativeName>
        <fullName>Butirosin biosynthesis protein H</fullName>
    </alternativeName>
</protein>
<evidence type="ECO:0000269" key="1">
    <source>
    </source>
</evidence>
<name>BTRH_NIACI</name>
<keyword id="KW-0012">Acyltransferase</keyword>
<keyword id="KW-0045">Antibiotic biosynthesis</keyword>
<keyword id="KW-0808">Transferase</keyword>
<gene>
    <name type="primary">btrH</name>
</gene>
<accession>Q4H4E9</accession>
<comment type="function">
    <text evidence="1">Aminoglycoside acyltransferase that attaches the (S)-4-amino-2-hydroxybutyrate (AHBA) side chain from the acyl carrier protein BtrI to the aminoglycoside ribostamycin in the biosynthetic pathway of butirosin. The AHBA side chain protects the antibiotic from several common resistance mechanisms.</text>
</comment>
<comment type="catalytic activity">
    <reaction evidence="1">
        <text>4-(gamma-L-glutamylamino)-(2S)-2-hydroxybutanoyl-[BtrI ACP] + ribostamycin = gamma-L-glutamyl-butirosin B + holo-[BtrI ACP] + H(+)</text>
        <dbReference type="Rhea" id="RHEA:53964"/>
        <dbReference type="Rhea" id="RHEA-COMP:13741"/>
        <dbReference type="Rhea" id="RHEA-COMP:13743"/>
        <dbReference type="ChEBI" id="CHEBI:15378"/>
        <dbReference type="ChEBI" id="CHEBI:64479"/>
        <dbReference type="ChEBI" id="CHEBI:65028"/>
        <dbReference type="ChEBI" id="CHEBI:65086"/>
        <dbReference type="ChEBI" id="CHEBI:137999"/>
        <dbReference type="EC" id="2.3.2.19"/>
    </reaction>
</comment>
<comment type="pathway">
    <text evidence="1">Antibiotic biosynthesis; butirosin biosynthesis.</text>
</comment>